<name>PYRB_SYNS9</name>
<reference key="1">
    <citation type="submission" date="2005-08" db="EMBL/GenBank/DDBJ databases">
        <title>Complete sequence of Synechococcus sp. CC9902.</title>
        <authorList>
            <person name="Copeland A."/>
            <person name="Lucas S."/>
            <person name="Lapidus A."/>
            <person name="Barry K."/>
            <person name="Detter J.C."/>
            <person name="Glavina T."/>
            <person name="Hammon N."/>
            <person name="Israni S."/>
            <person name="Pitluck S."/>
            <person name="Martinez M."/>
            <person name="Schmutz J."/>
            <person name="Larimer F."/>
            <person name="Land M."/>
            <person name="Kyrpides N."/>
            <person name="Ivanova N."/>
            <person name="Richardson P."/>
        </authorList>
    </citation>
    <scope>NUCLEOTIDE SEQUENCE [LARGE SCALE GENOMIC DNA]</scope>
    <source>
        <strain>CC9902</strain>
    </source>
</reference>
<dbReference type="EC" id="2.1.3.2" evidence="1"/>
<dbReference type="EMBL" id="CP000097">
    <property type="protein sequence ID" value="ABB27009.1"/>
    <property type="molecule type" value="Genomic_DNA"/>
</dbReference>
<dbReference type="RefSeq" id="WP_011360796.1">
    <property type="nucleotide sequence ID" value="NC_007513.1"/>
</dbReference>
<dbReference type="SMR" id="Q3AUM3"/>
<dbReference type="STRING" id="316279.Syncc9902_2051"/>
<dbReference type="KEGG" id="sye:Syncc9902_2051"/>
<dbReference type="eggNOG" id="COG0540">
    <property type="taxonomic scope" value="Bacteria"/>
</dbReference>
<dbReference type="HOGENOM" id="CLU_043846_2_0_3"/>
<dbReference type="OrthoDB" id="9774690at2"/>
<dbReference type="UniPathway" id="UPA00070">
    <property type="reaction ID" value="UER00116"/>
</dbReference>
<dbReference type="Proteomes" id="UP000002712">
    <property type="component" value="Chromosome"/>
</dbReference>
<dbReference type="GO" id="GO:0005829">
    <property type="term" value="C:cytosol"/>
    <property type="evidence" value="ECO:0007669"/>
    <property type="project" value="TreeGrafter"/>
</dbReference>
<dbReference type="GO" id="GO:0016597">
    <property type="term" value="F:amino acid binding"/>
    <property type="evidence" value="ECO:0007669"/>
    <property type="project" value="InterPro"/>
</dbReference>
<dbReference type="GO" id="GO:0004070">
    <property type="term" value="F:aspartate carbamoyltransferase activity"/>
    <property type="evidence" value="ECO:0007669"/>
    <property type="project" value="UniProtKB-UniRule"/>
</dbReference>
<dbReference type="GO" id="GO:0006207">
    <property type="term" value="P:'de novo' pyrimidine nucleobase biosynthetic process"/>
    <property type="evidence" value="ECO:0007669"/>
    <property type="project" value="InterPro"/>
</dbReference>
<dbReference type="GO" id="GO:0044205">
    <property type="term" value="P:'de novo' UMP biosynthetic process"/>
    <property type="evidence" value="ECO:0007669"/>
    <property type="project" value="UniProtKB-UniRule"/>
</dbReference>
<dbReference type="GO" id="GO:0006520">
    <property type="term" value="P:amino acid metabolic process"/>
    <property type="evidence" value="ECO:0007669"/>
    <property type="project" value="InterPro"/>
</dbReference>
<dbReference type="Gene3D" id="3.40.50.1370">
    <property type="entry name" value="Aspartate/ornithine carbamoyltransferase"/>
    <property type="match status" value="2"/>
</dbReference>
<dbReference type="HAMAP" id="MF_00001">
    <property type="entry name" value="Asp_carb_tr"/>
    <property type="match status" value="1"/>
</dbReference>
<dbReference type="InterPro" id="IPR006132">
    <property type="entry name" value="Asp/Orn_carbamoyltranf_P-bd"/>
</dbReference>
<dbReference type="InterPro" id="IPR006130">
    <property type="entry name" value="Asp/Orn_carbamoylTrfase"/>
</dbReference>
<dbReference type="InterPro" id="IPR036901">
    <property type="entry name" value="Asp/Orn_carbamoylTrfase_sf"/>
</dbReference>
<dbReference type="InterPro" id="IPR002082">
    <property type="entry name" value="Asp_carbamoyltransf"/>
</dbReference>
<dbReference type="InterPro" id="IPR006131">
    <property type="entry name" value="Asp_carbamoyltransf_Asp/Orn-bd"/>
</dbReference>
<dbReference type="NCBIfam" id="TIGR00670">
    <property type="entry name" value="asp_carb_tr"/>
    <property type="match status" value="1"/>
</dbReference>
<dbReference type="NCBIfam" id="NF002032">
    <property type="entry name" value="PRK00856.1"/>
    <property type="match status" value="1"/>
</dbReference>
<dbReference type="PANTHER" id="PTHR45753:SF6">
    <property type="entry name" value="ASPARTATE CARBAMOYLTRANSFERASE"/>
    <property type="match status" value="1"/>
</dbReference>
<dbReference type="PANTHER" id="PTHR45753">
    <property type="entry name" value="ORNITHINE CARBAMOYLTRANSFERASE, MITOCHONDRIAL"/>
    <property type="match status" value="1"/>
</dbReference>
<dbReference type="Pfam" id="PF00185">
    <property type="entry name" value="OTCace"/>
    <property type="match status" value="1"/>
</dbReference>
<dbReference type="Pfam" id="PF02729">
    <property type="entry name" value="OTCace_N"/>
    <property type="match status" value="1"/>
</dbReference>
<dbReference type="PRINTS" id="PR00100">
    <property type="entry name" value="AOTCASE"/>
</dbReference>
<dbReference type="PRINTS" id="PR00101">
    <property type="entry name" value="ATCASE"/>
</dbReference>
<dbReference type="SUPFAM" id="SSF53671">
    <property type="entry name" value="Aspartate/ornithine carbamoyltransferase"/>
    <property type="match status" value="1"/>
</dbReference>
<dbReference type="PROSITE" id="PS00097">
    <property type="entry name" value="CARBAMOYLTRANSFERASE"/>
    <property type="match status" value="1"/>
</dbReference>
<feature type="chain" id="PRO_0000321170" description="Aspartate carbamoyltransferase catalytic subunit">
    <location>
        <begin position="1"/>
        <end position="349"/>
    </location>
</feature>
<feature type="binding site" evidence="1">
    <location>
        <position position="59"/>
    </location>
    <ligand>
        <name>carbamoyl phosphate</name>
        <dbReference type="ChEBI" id="CHEBI:58228"/>
    </ligand>
</feature>
<feature type="binding site" evidence="1">
    <location>
        <position position="60"/>
    </location>
    <ligand>
        <name>carbamoyl phosphate</name>
        <dbReference type="ChEBI" id="CHEBI:58228"/>
    </ligand>
</feature>
<feature type="binding site" evidence="1">
    <location>
        <position position="87"/>
    </location>
    <ligand>
        <name>L-aspartate</name>
        <dbReference type="ChEBI" id="CHEBI:29991"/>
    </ligand>
</feature>
<feature type="binding site" evidence="1">
    <location>
        <position position="109"/>
    </location>
    <ligand>
        <name>carbamoyl phosphate</name>
        <dbReference type="ChEBI" id="CHEBI:58228"/>
    </ligand>
</feature>
<feature type="binding site" evidence="1">
    <location>
        <position position="142"/>
    </location>
    <ligand>
        <name>carbamoyl phosphate</name>
        <dbReference type="ChEBI" id="CHEBI:58228"/>
    </ligand>
</feature>
<feature type="binding site" evidence="1">
    <location>
        <position position="145"/>
    </location>
    <ligand>
        <name>carbamoyl phosphate</name>
        <dbReference type="ChEBI" id="CHEBI:58228"/>
    </ligand>
</feature>
<feature type="binding site" evidence="1">
    <location>
        <position position="182"/>
    </location>
    <ligand>
        <name>L-aspartate</name>
        <dbReference type="ChEBI" id="CHEBI:29991"/>
    </ligand>
</feature>
<feature type="binding site" evidence="1">
    <location>
        <position position="253"/>
    </location>
    <ligand>
        <name>L-aspartate</name>
        <dbReference type="ChEBI" id="CHEBI:29991"/>
    </ligand>
</feature>
<feature type="binding site" evidence="1">
    <location>
        <position position="294"/>
    </location>
    <ligand>
        <name>carbamoyl phosphate</name>
        <dbReference type="ChEBI" id="CHEBI:58228"/>
    </ligand>
</feature>
<feature type="binding site" evidence="1">
    <location>
        <position position="295"/>
    </location>
    <ligand>
        <name>carbamoyl phosphate</name>
        <dbReference type="ChEBI" id="CHEBI:58228"/>
    </ligand>
</feature>
<proteinExistence type="inferred from homology"/>
<gene>
    <name evidence="1" type="primary">pyrB</name>
    <name type="ordered locus">Syncc9902_2051</name>
</gene>
<sequence>MSGWHHRHILDLASFSRDDFASILELAQRFRSLPVTGVRKLPALQGRLVATLFFEPSTRTRSSFELAAKRLSADVMSFSPSSSSLSKGESVLDTARTYVAMGADVLVVRHRSTSVPQQLAADLDQLGERTVVLNGGDGLHSHPSQGLLDLLTLARYFDAQKPTPQALDGKKIVIVGDILHSRVARSNLWALTGCGADVVLCGPTSLLPEEFAAFVDAPPPGLSCDPVAQRGKVTVERRLEQALPGADAVMTLRLQKERMTQQLLTSLERYHRDYGLSHARLQLCGRQVPVLHPGPVNRGVEMTSQLLDDPTICLVEEQVRNGVPVRMALLYLMAAAESAAESSLVSISS</sequence>
<accession>Q3AUM3</accession>
<organism>
    <name type="scientific">Synechococcus sp. (strain CC9902)</name>
    <dbReference type="NCBI Taxonomy" id="316279"/>
    <lineage>
        <taxon>Bacteria</taxon>
        <taxon>Bacillati</taxon>
        <taxon>Cyanobacteriota</taxon>
        <taxon>Cyanophyceae</taxon>
        <taxon>Synechococcales</taxon>
        <taxon>Synechococcaceae</taxon>
        <taxon>Synechococcus</taxon>
    </lineage>
</organism>
<protein>
    <recommendedName>
        <fullName evidence="1">Aspartate carbamoyltransferase catalytic subunit</fullName>
        <ecNumber evidence="1">2.1.3.2</ecNumber>
    </recommendedName>
    <alternativeName>
        <fullName evidence="1">Aspartate transcarbamylase</fullName>
        <shortName evidence="1">ATCase</shortName>
    </alternativeName>
</protein>
<evidence type="ECO:0000255" key="1">
    <source>
        <dbReference type="HAMAP-Rule" id="MF_00001"/>
    </source>
</evidence>
<keyword id="KW-0665">Pyrimidine biosynthesis</keyword>
<keyword id="KW-1185">Reference proteome</keyword>
<keyword id="KW-0808">Transferase</keyword>
<comment type="function">
    <text evidence="1">Catalyzes the condensation of carbamoyl phosphate and aspartate to form carbamoyl aspartate and inorganic phosphate, the committed step in the de novo pyrimidine nucleotide biosynthesis pathway.</text>
</comment>
<comment type="catalytic activity">
    <reaction evidence="1">
        <text>carbamoyl phosphate + L-aspartate = N-carbamoyl-L-aspartate + phosphate + H(+)</text>
        <dbReference type="Rhea" id="RHEA:20013"/>
        <dbReference type="ChEBI" id="CHEBI:15378"/>
        <dbReference type="ChEBI" id="CHEBI:29991"/>
        <dbReference type="ChEBI" id="CHEBI:32814"/>
        <dbReference type="ChEBI" id="CHEBI:43474"/>
        <dbReference type="ChEBI" id="CHEBI:58228"/>
        <dbReference type="EC" id="2.1.3.2"/>
    </reaction>
</comment>
<comment type="pathway">
    <text evidence="1">Pyrimidine metabolism; UMP biosynthesis via de novo pathway; (S)-dihydroorotate from bicarbonate: step 2/3.</text>
</comment>
<comment type="subunit">
    <text evidence="1">Heterododecamer (2C3:3R2) of six catalytic PyrB chains organized as two trimers (C3), and six regulatory PyrI chains organized as three dimers (R2).</text>
</comment>
<comment type="similarity">
    <text evidence="1">Belongs to the aspartate/ornithine carbamoyltransferase superfamily. ATCase family.</text>
</comment>